<accession>Q83PZ0</accession>
<proteinExistence type="inferred from homology"/>
<evidence type="ECO:0000255" key="1">
    <source>
        <dbReference type="HAMAP-Rule" id="MF_00182"/>
    </source>
</evidence>
<keyword id="KW-0648">Protein biosynthesis</keyword>
<keyword id="KW-1185">Reference proteome</keyword>
<keyword id="KW-0808">Transferase</keyword>
<organism>
    <name type="scientific">Shigella flexneri</name>
    <dbReference type="NCBI Taxonomy" id="623"/>
    <lineage>
        <taxon>Bacteria</taxon>
        <taxon>Pseudomonadati</taxon>
        <taxon>Pseudomonadota</taxon>
        <taxon>Gammaproteobacteria</taxon>
        <taxon>Enterobacterales</taxon>
        <taxon>Enterobacteriaceae</taxon>
        <taxon>Shigella</taxon>
    </lineage>
</organism>
<dbReference type="EC" id="2.1.2.9" evidence="1"/>
<dbReference type="EMBL" id="AE005674">
    <property type="protein sequence ID" value="AAN44782.1"/>
    <property type="molecule type" value="Genomic_DNA"/>
</dbReference>
<dbReference type="EMBL" id="AE014073">
    <property type="protein sequence ID" value="AAP18591.1"/>
    <property type="molecule type" value="Genomic_DNA"/>
</dbReference>
<dbReference type="RefSeq" id="NP_709075.1">
    <property type="nucleotide sequence ID" value="NC_004337.2"/>
</dbReference>
<dbReference type="RefSeq" id="WP_000004428.1">
    <property type="nucleotide sequence ID" value="NZ_WPGW01000137.1"/>
</dbReference>
<dbReference type="SMR" id="Q83PZ0"/>
<dbReference type="STRING" id="198214.SF3319"/>
<dbReference type="PaxDb" id="198214-SF3319"/>
<dbReference type="GeneID" id="1027026"/>
<dbReference type="KEGG" id="sfl:SF3319"/>
<dbReference type="KEGG" id="sfx:S3544"/>
<dbReference type="PATRIC" id="fig|198214.7.peg.3928"/>
<dbReference type="HOGENOM" id="CLU_033347_1_2_6"/>
<dbReference type="Proteomes" id="UP000001006">
    <property type="component" value="Chromosome"/>
</dbReference>
<dbReference type="Proteomes" id="UP000002673">
    <property type="component" value="Chromosome"/>
</dbReference>
<dbReference type="GO" id="GO:0005829">
    <property type="term" value="C:cytosol"/>
    <property type="evidence" value="ECO:0007669"/>
    <property type="project" value="TreeGrafter"/>
</dbReference>
<dbReference type="GO" id="GO:0004479">
    <property type="term" value="F:methionyl-tRNA formyltransferase activity"/>
    <property type="evidence" value="ECO:0007669"/>
    <property type="project" value="UniProtKB-UniRule"/>
</dbReference>
<dbReference type="CDD" id="cd08646">
    <property type="entry name" value="FMT_core_Met-tRNA-FMT_N"/>
    <property type="match status" value="1"/>
</dbReference>
<dbReference type="CDD" id="cd08704">
    <property type="entry name" value="Met_tRNA_FMT_C"/>
    <property type="match status" value="1"/>
</dbReference>
<dbReference type="FunFam" id="3.10.25.10:FF:000001">
    <property type="entry name" value="Methionyl-tRNA formyltransferase"/>
    <property type="match status" value="1"/>
</dbReference>
<dbReference type="FunFam" id="3.40.50.170:FF:000003">
    <property type="entry name" value="Methionyl-tRNA formyltransferase"/>
    <property type="match status" value="1"/>
</dbReference>
<dbReference type="Gene3D" id="3.10.25.10">
    <property type="entry name" value="Formyl transferase, C-terminal domain"/>
    <property type="match status" value="1"/>
</dbReference>
<dbReference type="Gene3D" id="3.40.50.170">
    <property type="entry name" value="Formyl transferase, N-terminal domain"/>
    <property type="match status" value="1"/>
</dbReference>
<dbReference type="HAMAP" id="MF_00182">
    <property type="entry name" value="Formyl_trans"/>
    <property type="match status" value="1"/>
</dbReference>
<dbReference type="InterPro" id="IPR005794">
    <property type="entry name" value="Fmt"/>
</dbReference>
<dbReference type="InterPro" id="IPR005793">
    <property type="entry name" value="Formyl_trans_C"/>
</dbReference>
<dbReference type="InterPro" id="IPR037022">
    <property type="entry name" value="Formyl_trans_C_sf"/>
</dbReference>
<dbReference type="InterPro" id="IPR002376">
    <property type="entry name" value="Formyl_transf_N"/>
</dbReference>
<dbReference type="InterPro" id="IPR036477">
    <property type="entry name" value="Formyl_transf_N_sf"/>
</dbReference>
<dbReference type="InterPro" id="IPR011034">
    <property type="entry name" value="Formyl_transferase-like_C_sf"/>
</dbReference>
<dbReference type="InterPro" id="IPR001555">
    <property type="entry name" value="GART_AS"/>
</dbReference>
<dbReference type="InterPro" id="IPR044135">
    <property type="entry name" value="Met-tRNA-FMT_C"/>
</dbReference>
<dbReference type="InterPro" id="IPR041711">
    <property type="entry name" value="Met-tRNA-FMT_N"/>
</dbReference>
<dbReference type="NCBIfam" id="TIGR00460">
    <property type="entry name" value="fmt"/>
    <property type="match status" value="1"/>
</dbReference>
<dbReference type="PANTHER" id="PTHR11138">
    <property type="entry name" value="METHIONYL-TRNA FORMYLTRANSFERASE"/>
    <property type="match status" value="1"/>
</dbReference>
<dbReference type="PANTHER" id="PTHR11138:SF5">
    <property type="entry name" value="METHIONYL-TRNA FORMYLTRANSFERASE, MITOCHONDRIAL"/>
    <property type="match status" value="1"/>
</dbReference>
<dbReference type="Pfam" id="PF02911">
    <property type="entry name" value="Formyl_trans_C"/>
    <property type="match status" value="1"/>
</dbReference>
<dbReference type="Pfam" id="PF00551">
    <property type="entry name" value="Formyl_trans_N"/>
    <property type="match status" value="1"/>
</dbReference>
<dbReference type="SUPFAM" id="SSF50486">
    <property type="entry name" value="FMT C-terminal domain-like"/>
    <property type="match status" value="1"/>
</dbReference>
<dbReference type="SUPFAM" id="SSF53328">
    <property type="entry name" value="Formyltransferase"/>
    <property type="match status" value="1"/>
</dbReference>
<dbReference type="PROSITE" id="PS00373">
    <property type="entry name" value="GART"/>
    <property type="match status" value="1"/>
</dbReference>
<feature type="chain" id="PRO_0000083043" description="Methionyl-tRNA formyltransferase">
    <location>
        <begin position="1"/>
        <end position="315"/>
    </location>
</feature>
<feature type="binding site" evidence="1">
    <location>
        <begin position="113"/>
        <end position="116"/>
    </location>
    <ligand>
        <name>(6S)-5,6,7,8-tetrahydrofolate</name>
        <dbReference type="ChEBI" id="CHEBI:57453"/>
    </ligand>
</feature>
<sequence length="315" mass="34183">MSESLRIIFAGTPDFAARHLDALLSSGHNVVGVFTQPDRPAGRGKKLMPSPIKVLAEEEGLPVFQPVSLRPQENQQLVADLQADVMVVVAYGLILPKAVLEMPRLGCINIHGSLLPRWRGAAPIQRSLWAGDAETGVTIMQMDVGLDTGDMLYKLSCPITAEDTSGTLYDKLAELGPQGLITTLKQLADGTAKPEVQDETLVTYAEKLSKEEARIDWSLSAAQLERCIRAFNPWPMSWLEIEGQPVKVWKASVIDTATNAAPGTILEANKQGIQVATGDGILNLLSLQPAGKKAMSAQDLLNSRREWFVPGNRLV</sequence>
<name>FMT_SHIFL</name>
<protein>
    <recommendedName>
        <fullName evidence="1">Methionyl-tRNA formyltransferase</fullName>
        <ecNumber evidence="1">2.1.2.9</ecNumber>
    </recommendedName>
</protein>
<reference key="1">
    <citation type="journal article" date="2002" name="Nucleic Acids Res.">
        <title>Genome sequence of Shigella flexneri 2a: insights into pathogenicity through comparison with genomes of Escherichia coli K12 and O157.</title>
        <authorList>
            <person name="Jin Q."/>
            <person name="Yuan Z."/>
            <person name="Xu J."/>
            <person name="Wang Y."/>
            <person name="Shen Y."/>
            <person name="Lu W."/>
            <person name="Wang J."/>
            <person name="Liu H."/>
            <person name="Yang J."/>
            <person name="Yang F."/>
            <person name="Zhang X."/>
            <person name="Zhang J."/>
            <person name="Yang G."/>
            <person name="Wu H."/>
            <person name="Qu D."/>
            <person name="Dong J."/>
            <person name="Sun L."/>
            <person name="Xue Y."/>
            <person name="Zhao A."/>
            <person name="Gao Y."/>
            <person name="Zhu J."/>
            <person name="Kan B."/>
            <person name="Ding K."/>
            <person name="Chen S."/>
            <person name="Cheng H."/>
            <person name="Yao Z."/>
            <person name="He B."/>
            <person name="Chen R."/>
            <person name="Ma D."/>
            <person name="Qiang B."/>
            <person name="Wen Y."/>
            <person name="Hou Y."/>
            <person name="Yu J."/>
        </authorList>
    </citation>
    <scope>NUCLEOTIDE SEQUENCE [LARGE SCALE GENOMIC DNA]</scope>
    <source>
        <strain>301 / Serotype 2a</strain>
    </source>
</reference>
<reference key="2">
    <citation type="journal article" date="2003" name="Infect. Immun.">
        <title>Complete genome sequence and comparative genomics of Shigella flexneri serotype 2a strain 2457T.</title>
        <authorList>
            <person name="Wei J."/>
            <person name="Goldberg M.B."/>
            <person name="Burland V."/>
            <person name="Venkatesan M.M."/>
            <person name="Deng W."/>
            <person name="Fournier G."/>
            <person name="Mayhew G.F."/>
            <person name="Plunkett G. III"/>
            <person name="Rose D.J."/>
            <person name="Darling A."/>
            <person name="Mau B."/>
            <person name="Perna N.T."/>
            <person name="Payne S.M."/>
            <person name="Runyen-Janecky L.J."/>
            <person name="Zhou S."/>
            <person name="Schwartz D.C."/>
            <person name="Blattner F.R."/>
        </authorList>
    </citation>
    <scope>NUCLEOTIDE SEQUENCE [LARGE SCALE GENOMIC DNA]</scope>
    <source>
        <strain>ATCC 700930 / 2457T / Serotype 2a</strain>
    </source>
</reference>
<comment type="function">
    <text evidence="1">Attaches a formyl group to the free amino group of methionyl-tRNA(fMet). The formyl group appears to play a dual role in the initiator identity of N-formylmethionyl-tRNA by promoting its recognition by IF2 and preventing the misappropriation of this tRNA by the elongation apparatus.</text>
</comment>
<comment type="catalytic activity">
    <reaction evidence="1">
        <text>L-methionyl-tRNA(fMet) + (6R)-10-formyltetrahydrofolate = N-formyl-L-methionyl-tRNA(fMet) + (6S)-5,6,7,8-tetrahydrofolate + H(+)</text>
        <dbReference type="Rhea" id="RHEA:24380"/>
        <dbReference type="Rhea" id="RHEA-COMP:9952"/>
        <dbReference type="Rhea" id="RHEA-COMP:9953"/>
        <dbReference type="ChEBI" id="CHEBI:15378"/>
        <dbReference type="ChEBI" id="CHEBI:57453"/>
        <dbReference type="ChEBI" id="CHEBI:78530"/>
        <dbReference type="ChEBI" id="CHEBI:78844"/>
        <dbReference type="ChEBI" id="CHEBI:195366"/>
        <dbReference type="EC" id="2.1.2.9"/>
    </reaction>
</comment>
<comment type="similarity">
    <text evidence="1">Belongs to the Fmt family.</text>
</comment>
<gene>
    <name evidence="1" type="primary">fmt</name>
    <name type="ordered locus">SF3319</name>
    <name type="ordered locus">S3544</name>
</gene>